<gene>
    <name type="primary">CCM1</name>
    <name type="ordered locus">ZYRO0G09592g</name>
</gene>
<sequence>MLSLKSRGSWNVLRWIQVPRRTAVIPAKPSPMRRKRRRIKNVSSKDLDLRGIDPQDSRALEFKVKQLQEFTRNLKEQFKLADSNTKKLEAEEELAKSIPEDDDKRADELFGKLEAPAFEKPLPQPNLSTLILSAENQQLKKLIPVEIKERINDDGFLLARLIDKDNQNWNDIISKLYTTEKRLSDISMPIISSGILRKVKNLSYENIEKLDIMLLETKNGDITCFNRLMYETLLLNLSNLRPPTSGEEDKVTMKMRQLLERYDKSKEISPDVPSKMTQFSLNCCLKYSTKSVSFENMEYFLSKFKNDYGITPNRENYTTVIQFYVKFGVSKQAWDVFDTMKFLSSSHAPDVTTYNSVLHLCNRERDYAKAIDLYEEMLDRQLQPSIQTLNIMAKTMARASADNVISEGKADSLRLLGWKYIHTLESTFDHTKHETHFYHTLEAMMALAAYDGDVGFARALYYKYTTRKYKEVVKYWKGKFDSQKIWQTALDPQLFNLLLLAYANFRPNKLPILLGYEKGIKLRRNILNSVDYAGRYDLDDEIKVQLPMLPISDMNQAWQILAESRALWQFNLEFGGYYDLRDTPEGFDTTRLQEMVSKSATQDELQFNILHQVSQWKFQLVNHSILNPKSLTTFLTIPIKNGDRIEFMLRLKEFTFQQNDLESRIEKLYKGLKLVESRVEPNSHERDLAINQIEMDENVKWFASMKHKIVAKNYIYELMMKAASAFKDSAISKDAWQSRGEYRKTKLFQQMDSKRRIESDTQFAALMVQFFARQNMLTDALAIVMSTRKFIDWKYHMVKGLHEGLVKLEDEKSISILLDIVNKKSSIELLDEKIRDFQL</sequence>
<comment type="function">
    <text evidence="1">Regulates mitochondrial small subunit maturation by controlling 15S rRNA 5'-end processing. Localizes to the 5' precursor of the 15S rRNA in a position that is subsequently occupied by mS47 in the mature yeast mtSSU. Uses structure and sequence-specific RNA recognition, binding to a single-stranded region of the precursor and specifically recognizing bases -6 to -1. The exchange of Ccm1 for mS47 is coupled to the irreversible removal of precursor rRNA that is accompanied by conformational changes of the mitoribosomal proteins uS5m and mS26. These conformational changes signal completion of 5'-end rRNA processing through protection of the mature 5'-end of the 15S rRNA and stabilization of mS47. The removal of the 5' precursor together with the dissociation of Ccm1 may be catalyzed by the 5'-3' exoribonuclease Pet127. Involved in the specific removal of group I introns in mitochondrial encoded transcripts.</text>
</comment>
<comment type="subunit">
    <text evidence="1">Binds to mitochondrial small subunit 15S rRNA.</text>
</comment>
<comment type="subcellular location">
    <subcellularLocation>
        <location evidence="1">Mitochondrion</location>
    </subcellularLocation>
</comment>
<comment type="miscellaneous">
    <text evidence="1">Involved in mitochondrial-nuclear incompatibility, a major determinant in reproductive isolation between species, through hybrid incompatibility of Ccm1 and its interacting partner 15S rRNA between yeast species.</text>
</comment>
<comment type="similarity">
    <text evidence="4">Belongs to the CCM1 family.</text>
</comment>
<protein>
    <recommendedName>
        <fullName>Mitochondrial 15S rRNA processing factor CCM1</fullName>
    </recommendedName>
</protein>
<accession>C5E042</accession>
<reference key="1">
    <citation type="journal article" date="2009" name="Genome Res.">
        <title>Comparative genomics of protoploid Saccharomycetaceae.</title>
        <authorList>
            <consortium name="The Genolevures Consortium"/>
            <person name="Souciet J.-L."/>
            <person name="Dujon B."/>
            <person name="Gaillardin C."/>
            <person name="Johnston M."/>
            <person name="Baret P.V."/>
            <person name="Cliften P."/>
            <person name="Sherman D.J."/>
            <person name="Weissenbach J."/>
            <person name="Westhof E."/>
            <person name="Wincker P."/>
            <person name="Jubin C."/>
            <person name="Poulain J."/>
            <person name="Barbe V."/>
            <person name="Segurens B."/>
            <person name="Artiguenave F."/>
            <person name="Anthouard V."/>
            <person name="Vacherie B."/>
            <person name="Val M.-E."/>
            <person name="Fulton R.S."/>
            <person name="Minx P."/>
            <person name="Wilson R."/>
            <person name="Durrens P."/>
            <person name="Jean G."/>
            <person name="Marck C."/>
            <person name="Martin T."/>
            <person name="Nikolski M."/>
            <person name="Rolland T."/>
            <person name="Seret M.-L."/>
            <person name="Casaregola S."/>
            <person name="Despons L."/>
            <person name="Fairhead C."/>
            <person name="Fischer G."/>
            <person name="Lafontaine I."/>
            <person name="Leh V."/>
            <person name="Lemaire M."/>
            <person name="de Montigny J."/>
            <person name="Neuveglise C."/>
            <person name="Thierry A."/>
            <person name="Blanc-Lenfle I."/>
            <person name="Bleykasten C."/>
            <person name="Diffels J."/>
            <person name="Fritsch E."/>
            <person name="Frangeul L."/>
            <person name="Goeffon A."/>
            <person name="Jauniaux N."/>
            <person name="Kachouri-Lafond R."/>
            <person name="Payen C."/>
            <person name="Potier S."/>
            <person name="Pribylova L."/>
            <person name="Ozanne C."/>
            <person name="Richard G.-F."/>
            <person name="Sacerdot C."/>
            <person name="Straub M.-L."/>
            <person name="Talla E."/>
        </authorList>
    </citation>
    <scope>NUCLEOTIDE SEQUENCE [LARGE SCALE GENOMIC DNA]</scope>
    <source>
        <strain>ATCC 2623 / CBS 732 / BCRC 21506 / NBRC 1130 / NCYC 568 / NRRL Y-229</strain>
    </source>
</reference>
<keyword id="KW-0496">Mitochondrion</keyword>
<keyword id="KW-0507">mRNA processing</keyword>
<keyword id="KW-0508">mRNA splicing</keyword>
<keyword id="KW-1185">Reference proteome</keyword>
<keyword id="KW-0677">Repeat</keyword>
<keyword id="KW-0809">Transit peptide</keyword>
<evidence type="ECO:0000250" key="1">
    <source>
        <dbReference type="UniProtKB" id="P48237"/>
    </source>
</evidence>
<evidence type="ECO:0000255" key="2"/>
<evidence type="ECO:0000255" key="3">
    <source>
        <dbReference type="PROSITE-ProRule" id="PRU00708"/>
    </source>
</evidence>
<evidence type="ECO:0000305" key="4"/>
<dbReference type="EMBL" id="CU928179">
    <property type="protein sequence ID" value="CAR29476.1"/>
    <property type="molecule type" value="Genomic_DNA"/>
</dbReference>
<dbReference type="RefSeq" id="XP_002498409.1">
    <property type="nucleotide sequence ID" value="XM_002498364.1"/>
</dbReference>
<dbReference type="SMR" id="C5E042"/>
<dbReference type="FunCoup" id="C5E042">
    <property type="interactions" value="135"/>
</dbReference>
<dbReference type="STRING" id="559307.C5E042"/>
<dbReference type="GeneID" id="8206215"/>
<dbReference type="KEGG" id="zro:ZYRO0G09592g"/>
<dbReference type="HOGENOM" id="CLU_334653_0_0_1"/>
<dbReference type="InParanoid" id="C5E042"/>
<dbReference type="Proteomes" id="UP000008536">
    <property type="component" value="Chromosome G"/>
</dbReference>
<dbReference type="GO" id="GO:0005739">
    <property type="term" value="C:mitochondrion"/>
    <property type="evidence" value="ECO:0007669"/>
    <property type="project" value="UniProtKB-SubCell"/>
</dbReference>
<dbReference type="GO" id="GO:0006397">
    <property type="term" value="P:mRNA processing"/>
    <property type="evidence" value="ECO:0007669"/>
    <property type="project" value="UniProtKB-KW"/>
</dbReference>
<dbReference type="GO" id="GO:0008380">
    <property type="term" value="P:RNA splicing"/>
    <property type="evidence" value="ECO:0007669"/>
    <property type="project" value="UniProtKB-KW"/>
</dbReference>
<dbReference type="Gene3D" id="1.25.40.10">
    <property type="entry name" value="Tetratricopeptide repeat domain"/>
    <property type="match status" value="1"/>
</dbReference>
<dbReference type="InterPro" id="IPR002885">
    <property type="entry name" value="Pentatricopeptide_rpt"/>
</dbReference>
<dbReference type="InterPro" id="IPR011990">
    <property type="entry name" value="TPR-like_helical_dom_sf"/>
</dbReference>
<dbReference type="NCBIfam" id="TIGR00756">
    <property type="entry name" value="PPR"/>
    <property type="match status" value="1"/>
</dbReference>
<dbReference type="PANTHER" id="PTHR47447">
    <property type="entry name" value="OS03G0856100 PROTEIN"/>
    <property type="match status" value="1"/>
</dbReference>
<dbReference type="PANTHER" id="PTHR47447:SF24">
    <property type="entry name" value="PENTATRICOPEPTIDE REPEAT-CONTAINING PROTEIN"/>
    <property type="match status" value="1"/>
</dbReference>
<dbReference type="Pfam" id="PF01535">
    <property type="entry name" value="PPR"/>
    <property type="match status" value="1"/>
</dbReference>
<dbReference type="Pfam" id="PF13041">
    <property type="entry name" value="PPR_2"/>
    <property type="match status" value="1"/>
</dbReference>
<dbReference type="PROSITE" id="PS51375">
    <property type="entry name" value="PPR"/>
    <property type="match status" value="2"/>
</dbReference>
<name>CCM1_ZYGRC</name>
<feature type="transit peptide" description="Mitochondrion" evidence="2">
    <location>
        <begin position="1"/>
        <end position="59"/>
    </location>
</feature>
<feature type="chain" id="PRO_0000402275" description="Mitochondrial 15S rRNA processing factor CCM1" evidence="2">
    <location>
        <begin position="60"/>
        <end position="839"/>
    </location>
</feature>
<feature type="repeat" description="PPR 1" evidence="3">
    <location>
        <begin position="313"/>
        <end position="347"/>
    </location>
</feature>
<feature type="repeat" description="PPR 2" evidence="3">
    <location>
        <begin position="350"/>
        <end position="384"/>
    </location>
</feature>
<proteinExistence type="inferred from homology"/>
<organism>
    <name type="scientific">Zygosaccharomyces rouxii (strain ATCC 2623 / CBS 732 / NBRC 1130 / NCYC 568 / NRRL Y-229)</name>
    <dbReference type="NCBI Taxonomy" id="559307"/>
    <lineage>
        <taxon>Eukaryota</taxon>
        <taxon>Fungi</taxon>
        <taxon>Dikarya</taxon>
        <taxon>Ascomycota</taxon>
        <taxon>Saccharomycotina</taxon>
        <taxon>Saccharomycetes</taxon>
        <taxon>Saccharomycetales</taxon>
        <taxon>Saccharomycetaceae</taxon>
        <taxon>Zygosaccharomyces</taxon>
    </lineage>
</organism>